<sequence length="1406" mass="158658">MDMVENADSLQAQERKDILMKYDKGHRAGLPEDKGPEPVGINSSIDRFGILHETELPPVTAREAKKIRREMTRTSKWMEMLGEWETYKHSSKLIDRVYKGIPMNIRGPVWSVLLNIQEIKLKNPGRYQIMKERGKRSSEHIHHIDLDVRTTLRNHVFFRDRYGAKQRELFYILLAYSEYNPEVGYCRDLSHITALFLLYLPEEDAFWALVQLLASERHSLPGFHSPNGGTVQGLQDQQEHVVPKSQPKTMWHQDKEGLCGQCASLGCLLRNLIDGISLGLTLRLWDVYLVEGEQVLMPITSIALKVQQKRLMKTSRCGLWARLRNQFFDTWAMNDDTVLKHLRASTKKLTRKQGDLPPPAKREQGSLAPRPVPASRGGKTLCKGYRQAPPGPPAQFQRPICSASPPWASRFSTPCPGGAVREDTYPVGTQGVPSLALAQGGPQGSWRFLEWKSMPRLPTDLDIGGPWFPHYDFEWSCWVRAISQEDQLATCWQAEHCGEVHNKDMSWPEEMSFTANSSKIDRQKVPTEKGATGLSNLGNTCFMNSSIQCVSNTQPLTQYFISGRHLYELNRTNPIGMKGHMAKCYGDLVQELWSGTQKSVAPLKLRRTIAKYAPKFDGFQQQDSQELLAFLLDGLHEDLNRVHEKPYVELKDSDGRPDWEVAAEAWDNHLRRNRSIIVDLFHGQLRSQVKCKTCGHISVRFDPFNFLSLPLPMDSYMDLEITVIKLDGTTPVRYGLRLNMDEKYTGLKKQLRDLCGLNSEQILLAEVHDSNIKNFPQDNQKVQLSVSGFLCAFEIPVPSSPISASSPTQIDFSSSPSTNGMFTLTTNGDLPKPIFIPNGMPNTVVPCGTEKNFTNGMVNGHMPSLPDSPFTGYIIAVHRKMMRTELYFLSPQENRPSLFGMPLIVPCTVHTRKKDLYDAVWIQVSWLARPLPPQEASIHAQDRDNCMGYQYPFTLRVVQKDGNSCAWCPQYRFCRGCKIDCGEDRAFIGNAYIAVDWHPTALHLRYQTSQERVVDKHESVEQSRRAQAEPINLDSCLRAFTSEEELGESEMYYCSKCKTHCLATKKLDLWRLPPFLIIHLKRFQFVNDQWIKSQKIVRFLRESFDPSAFLVPRDPALCQHKPLTPQGDELSKPRILAREVKKVDAQSSAGKEDMLLSKSPSSLSANISSSPKGSPSSSRKSGTSCPSSKNSSPNSSPRTLGRSKGRLRLPQIGSKNKPSSSKKNLDASKENGAGQICELADALSRGHMRGGSQPELVTPQDHEVALANGFLYEHEACGNGCGDGYSNGQLGNHSEEDSTDDQREDTHIKPIYNLYAISCHSGILSGGHYITYAKNPNCKWYCYNDSSCEELHPDEIDTDSAYILFYEQQGIDYAQFLPKIDGKKMADTSSTDEDSESDYEKYSMLQ</sequence>
<organism>
    <name type="scientific">Homo sapiens</name>
    <name type="common">Human</name>
    <dbReference type="NCBI Taxonomy" id="9606"/>
    <lineage>
        <taxon>Eukaryota</taxon>
        <taxon>Metazoa</taxon>
        <taxon>Chordata</taxon>
        <taxon>Craniata</taxon>
        <taxon>Vertebrata</taxon>
        <taxon>Euteleostomi</taxon>
        <taxon>Mammalia</taxon>
        <taxon>Eutheria</taxon>
        <taxon>Euarchontoglires</taxon>
        <taxon>Primates</taxon>
        <taxon>Haplorrhini</taxon>
        <taxon>Catarrhini</taxon>
        <taxon>Hominidae</taxon>
        <taxon>Homo</taxon>
    </lineage>
</organism>
<gene>
    <name type="primary">USP6</name>
    <name type="synonym">HRP1</name>
    <name type="synonym">TRE2</name>
</gene>
<evidence type="ECO:0000255" key="1">
    <source>
        <dbReference type="PROSITE-ProRule" id="PRU00163"/>
    </source>
</evidence>
<evidence type="ECO:0000255" key="2">
    <source>
        <dbReference type="PROSITE-ProRule" id="PRU10092"/>
    </source>
</evidence>
<evidence type="ECO:0000255" key="3">
    <source>
        <dbReference type="PROSITE-ProRule" id="PRU10093"/>
    </source>
</evidence>
<evidence type="ECO:0000256" key="4">
    <source>
        <dbReference type="SAM" id="MobiDB-lite"/>
    </source>
</evidence>
<evidence type="ECO:0000269" key="5">
    <source>
    </source>
</evidence>
<evidence type="ECO:0000269" key="6">
    <source>
    </source>
</evidence>
<evidence type="ECO:0000269" key="7">
    <source>
    </source>
</evidence>
<evidence type="ECO:0000269" key="8">
    <source>
    </source>
</evidence>
<evidence type="ECO:0000269" key="9">
    <source>
    </source>
</evidence>
<evidence type="ECO:0000269" key="10">
    <source>
    </source>
</evidence>
<evidence type="ECO:0000269" key="11">
    <source>
    </source>
</evidence>
<evidence type="ECO:0000269" key="12">
    <source>
    </source>
</evidence>
<evidence type="ECO:0000269" key="13">
    <source>
    </source>
</evidence>
<evidence type="ECO:0000269" key="14">
    <source ref="5"/>
</evidence>
<evidence type="ECO:0000303" key="15">
    <source>
    </source>
</evidence>
<evidence type="ECO:0000303" key="16">
    <source>
    </source>
</evidence>
<evidence type="ECO:0000305" key="17"/>
<reference key="1">
    <citation type="journal article" date="1992" name="Oncogene">
        <title>A novel transcriptional unit of the tre oncogene widely expressed in human cancer cells.</title>
        <authorList>
            <person name="Nakamura T."/>
            <person name="Hillova J."/>
            <person name="Mariage-Samson R."/>
            <person name="Onno M."/>
            <person name="Huebner K."/>
            <person name="Cannizzaro L.A."/>
            <person name="Boghosian-Sell L."/>
            <person name="Croce C.M."/>
            <person name="Hill M."/>
        </authorList>
    </citation>
    <scope>NUCLEOTIDE SEQUENCE [MRNA] (ISOFORMS 2 AND 3)</scope>
    <scope>TISSUE SPECIFICITY</scope>
    <scope>VARIANTS ARG-475 AND GLN-912</scope>
    <source>
        <tissue>Ewing sarcoma</tissue>
    </source>
</reference>
<reference key="2">
    <citation type="journal article" date="2003" name="Proc. Natl. Acad. Sci. U.S.A.">
        <title>The Tre2 (USP6) oncogene is a hominoid-specific gene.</title>
        <authorList>
            <person name="Paulding C.A."/>
            <person name="Ruvolo M."/>
            <person name="Haber D.A."/>
        </authorList>
    </citation>
    <scope>NUCLEOTIDE SEQUENCE [GENOMIC DNA / MRNA] (ISOFORM 1)</scope>
    <scope>ALTERNATIVE SPLICING</scope>
    <scope>TISSUE SPECIFICITY</scope>
    <scope>DISCUSSION OF TRE2 EVOLUTION</scope>
</reference>
<reference key="3">
    <citation type="journal article" date="2009" name="Genes Cells">
        <title>Identification and characterization of a novel Tre-2/Bub2/Cdc16 (TBC) protein that possesses Rab3A-GAP activity.</title>
        <authorList>
            <person name="Ishibashi K."/>
            <person name="Kanno E."/>
            <person name="Itoh T."/>
            <person name="Fukuda M."/>
        </authorList>
    </citation>
    <scope>NUCLEOTIDE SEQUENCE [MRNA] (ISOFORM 3)</scope>
    <scope>VARIANT ARG-475</scope>
    <scope>FUNCTION</scope>
    <scope>SUBCELLULAR LOCATION</scope>
    <source>
        <tissue>Brain</tissue>
    </source>
</reference>
<reference key="4">
    <citation type="journal article" date="2006" name="Nature">
        <title>DNA sequence of human chromosome 17 and analysis of rearrangement in the human lineage.</title>
        <authorList>
            <person name="Zody M.C."/>
            <person name="Garber M."/>
            <person name="Adams D.J."/>
            <person name="Sharpe T."/>
            <person name="Harrow J."/>
            <person name="Lupski J.R."/>
            <person name="Nicholson C."/>
            <person name="Searle S.M."/>
            <person name="Wilming L."/>
            <person name="Young S.K."/>
            <person name="Abouelleil A."/>
            <person name="Allen N.R."/>
            <person name="Bi W."/>
            <person name="Bloom T."/>
            <person name="Borowsky M.L."/>
            <person name="Bugalter B.E."/>
            <person name="Butler J."/>
            <person name="Chang J.L."/>
            <person name="Chen C.-K."/>
            <person name="Cook A."/>
            <person name="Corum B."/>
            <person name="Cuomo C.A."/>
            <person name="de Jong P.J."/>
            <person name="DeCaprio D."/>
            <person name="Dewar K."/>
            <person name="FitzGerald M."/>
            <person name="Gilbert J."/>
            <person name="Gibson R."/>
            <person name="Gnerre S."/>
            <person name="Goldstein S."/>
            <person name="Grafham D.V."/>
            <person name="Grocock R."/>
            <person name="Hafez N."/>
            <person name="Hagopian D.S."/>
            <person name="Hart E."/>
            <person name="Norman C.H."/>
            <person name="Humphray S."/>
            <person name="Jaffe D.B."/>
            <person name="Jones M."/>
            <person name="Kamal M."/>
            <person name="Khodiyar V.K."/>
            <person name="LaButti K."/>
            <person name="Laird G."/>
            <person name="Lehoczky J."/>
            <person name="Liu X."/>
            <person name="Lokyitsang T."/>
            <person name="Loveland J."/>
            <person name="Lui A."/>
            <person name="Macdonald P."/>
            <person name="Major J.E."/>
            <person name="Matthews L."/>
            <person name="Mauceli E."/>
            <person name="McCarroll S.A."/>
            <person name="Mihalev A.H."/>
            <person name="Mudge J."/>
            <person name="Nguyen C."/>
            <person name="Nicol R."/>
            <person name="O'Leary S.B."/>
            <person name="Osoegawa K."/>
            <person name="Schwartz D.C."/>
            <person name="Shaw-Smith C."/>
            <person name="Stankiewicz P."/>
            <person name="Steward C."/>
            <person name="Swarbreck D."/>
            <person name="Venkataraman V."/>
            <person name="Whittaker C.A."/>
            <person name="Yang X."/>
            <person name="Zimmer A.R."/>
            <person name="Bradley A."/>
            <person name="Hubbard T."/>
            <person name="Birren B.W."/>
            <person name="Rogers J."/>
            <person name="Lander E.S."/>
            <person name="Nusbaum C."/>
        </authorList>
    </citation>
    <scope>NUCLEOTIDE SEQUENCE [LARGE SCALE GENOMIC DNA]</scope>
</reference>
<reference key="5">
    <citation type="submission" date="2005-09" db="EMBL/GenBank/DDBJ databases">
        <authorList>
            <person name="Mural R.J."/>
            <person name="Istrail S."/>
            <person name="Sutton G.G."/>
            <person name="Florea L."/>
            <person name="Halpern A.L."/>
            <person name="Mobarry C.M."/>
            <person name="Lippert R."/>
            <person name="Walenz B."/>
            <person name="Shatkay H."/>
            <person name="Dew I."/>
            <person name="Miller J.R."/>
            <person name="Flanigan M.J."/>
            <person name="Edwards N.J."/>
            <person name="Bolanos R."/>
            <person name="Fasulo D."/>
            <person name="Halldorsson B.V."/>
            <person name="Hannenhalli S."/>
            <person name="Turner R."/>
            <person name="Yooseph S."/>
            <person name="Lu F."/>
            <person name="Nusskern D.R."/>
            <person name="Shue B.C."/>
            <person name="Zheng X.H."/>
            <person name="Zhong F."/>
            <person name="Delcher A.L."/>
            <person name="Huson D.H."/>
            <person name="Kravitz S.A."/>
            <person name="Mouchard L."/>
            <person name="Reinert K."/>
            <person name="Remington K.A."/>
            <person name="Clark A.G."/>
            <person name="Waterman M.S."/>
            <person name="Eichler E.E."/>
            <person name="Adams M.D."/>
            <person name="Hunkapiller M.W."/>
            <person name="Myers E.W."/>
            <person name="Venter J.C."/>
        </authorList>
    </citation>
    <scope>NUCLEOTIDE SEQUENCE [LARGE SCALE GENOMIC DNA]</scope>
    <scope>VARIANT ARG-475</scope>
</reference>
<reference key="6">
    <citation type="journal article" date="1993" name="Nature">
        <title>The yeast DOA4 gene encodes a deubiquitinating enzyme related to a product of the human tre-2 oncogene.</title>
        <authorList>
            <person name="Papa F.R."/>
            <person name="Hochstrasser M."/>
        </authorList>
    </citation>
    <scope>CHARACTERIZATION</scope>
</reference>
<reference key="7">
    <citation type="journal article" date="2003" name="Biochem. Biophys. Res. Commun.">
        <title>Expression in a RabGAP yeast mutant of two human homologues, one of which is an oncogene.</title>
        <authorList>
            <person name="Bizimungu C."/>
            <person name="De Neve N."/>
            <person name="Burny A."/>
            <person name="Bach S."/>
            <person name="Bontemps F."/>
            <person name="Portetelle D."/>
            <person name="Vandenbol M."/>
        </authorList>
    </citation>
    <scope>MUTAGENESIS OF THR-150 AND ARG-187</scope>
</reference>
<reference key="8">
    <citation type="journal article" date="2003" name="Mol. Cell. Biol.">
        <title>The TRE17 oncogene encodes a component of a novel effector pathway for Rho GTPases Cdc42 and Rac1 and stimulates actin remodeling.</title>
        <authorList>
            <person name="Masuda-Robens J.M."/>
            <person name="Kutney S.N."/>
            <person name="Qi H."/>
            <person name="Chou M.M."/>
        </authorList>
    </citation>
    <scope>SUBCELLULAR LOCATION</scope>
    <scope>INTERACTION WITH RAC1 AND CDC42</scope>
</reference>
<reference key="9">
    <citation type="journal article" date="2004" name="Cancer Res.">
        <title>USP6 (Tre2) fusion oncogenes in aneurysmal bone cyst.</title>
        <authorList>
            <person name="Oliveira A.M."/>
            <person name="Hsi B.L."/>
            <person name="Weremowicz S."/>
            <person name="Rosenberg A.E."/>
            <person name="Dal Cin P."/>
            <person name="Joseph N."/>
            <person name="Bridge J.A."/>
            <person name="Perez-Atayde A.R."/>
            <person name="Fletcher J.A."/>
        </authorList>
    </citation>
    <scope>CHROMOSOMAL TRANSLOCATION WITH CDH11</scope>
</reference>
<reference key="10">
    <citation type="journal article" date="2004" name="Mol. Cell. Biol.">
        <title>The TBC (Tre-2/Bub2/Cdc16) domain protein TRE17 regulates plasma membrane-endosomal trafficking through activation of Arf6.</title>
        <authorList>
            <person name="Martinu L."/>
            <person name="Masuda-Robens J.M."/>
            <person name="Robertson S.E."/>
            <person name="Santy L.C."/>
            <person name="Casanova J.E."/>
            <person name="Chou M.M."/>
        </authorList>
    </citation>
    <scope>FUNCTION</scope>
    <scope>SUBCELLULAR LOCATION</scope>
    <scope>INTERACTION WITH ARF6</scope>
</reference>
<reference key="11">
    <citation type="journal article" date="2005" name="J. Biol. Chem.">
        <title>Calcium/calmodulin regulates ubiquitination of the ubiquitin-specific protease TRE17/USP6.</title>
        <authorList>
            <person name="Shen C."/>
            <person name="Ye Y."/>
            <person name="Robertson S.E."/>
            <person name="Lau A.W."/>
            <person name="Mak D.O."/>
            <person name="Chou M.M."/>
        </authorList>
    </citation>
    <scope>FUNCTION</scope>
    <scope>INTERACTION WITH CALMODULIN</scope>
    <scope>UBIQUITINATION</scope>
    <scope>MUTAGENESIS OF CYS-541</scope>
</reference>
<reference key="12">
    <citation type="journal article" date="2008" name="Proc. Natl. Acad. Sci. U.S.A.">
        <title>A quantitative atlas of mitotic phosphorylation.</title>
        <authorList>
            <person name="Dephoure N."/>
            <person name="Zhou C."/>
            <person name="Villen J."/>
            <person name="Beausoleil S.A."/>
            <person name="Bakalarski C.E."/>
            <person name="Elledge S.J."/>
            <person name="Gygi S.P."/>
        </authorList>
    </citation>
    <scope>IDENTIFICATION BY MASS SPECTROMETRY [LARGE SCALE ANALYSIS]</scope>
    <source>
        <tissue>Cervix carcinoma</tissue>
    </source>
</reference>
<reference key="13">
    <citation type="journal article" date="2010" name="Oncogene">
        <title>TRE17/USP6 oncogene translocated in aneurysmal bone cyst induces matrix metalloproteinase production via activation of NF-kappaB.</title>
        <authorList>
            <person name="Ye Y."/>
            <person name="Pringle L.M."/>
            <person name="Lau A.W."/>
            <person name="Riquelme D.N."/>
            <person name="Wang H."/>
            <person name="Jiang T."/>
            <person name="Lev D."/>
            <person name="Welman A."/>
            <person name="Blobel G.A."/>
            <person name="Oliveira A.M."/>
            <person name="Chou M.M."/>
        </authorList>
    </citation>
    <scope>FUNCTION</scope>
</reference>
<name>UBP6_HUMAN</name>
<comment type="function">
    <text evidence="9 11 12 13">Deubiquitinase with an ATP-independent isopeptidase activity, cleaving at the C-terminus of the ubiquitin moiety. Catalyzes its own deubiquitination. In vitro, isoform 2, but not isoform 3, shows deubiquitinating activity. Promotes plasma membrane localization of ARF6 and selectively regulates ARF6-dependent endocytic protein trafficking. Is able to initiate tumorigenesis by inducing the production of matrix metalloproteinases following NF-kappa-B activation. May act as a GTPase-activating protein for RAB3A (PubMed:19077034).</text>
</comment>
<comment type="catalytic activity">
    <reaction>
        <text>Thiol-dependent hydrolysis of ester, thioester, amide, peptide and isopeptide bonds formed by the C-terminal Gly of ubiquitin (a 76-residue protein attached to proteins as an intracellular targeting signal).</text>
        <dbReference type="EC" id="3.4.19.12"/>
    </reaction>
</comment>
<comment type="subunit">
    <text evidence="6 9 11">Interacts with RAC1 and CDC42. Interacts (via Rab-GAP TBC domain) with ARF6. Interacts with calmodulin (CALM1, CALM2 and/or CALM3); the interaction is calcium-dependent.</text>
</comment>
<comment type="interaction">
    <interactant intactId="EBI-954590">
        <id>P35125-3</id>
    </interactant>
    <interactant intactId="EBI-1245329">
        <id>Q8N8A2</id>
        <label>ANKRD44</label>
    </interactant>
    <organismsDiffer>false</organismsDiffer>
    <experiments>4</experiments>
</comment>
<comment type="interaction">
    <interactant intactId="EBI-954590">
        <id>P35125-3</id>
    </interactant>
    <interactant intactId="EBI-725770">
        <id>P10916</id>
        <label>MYL2</label>
    </interactant>
    <organismsDiffer>false</organismsDiffer>
    <experiments>5</experiments>
</comment>
<comment type="subcellular location">
    <subcellularLocation>
        <location evidence="12">Cell membrane</location>
    </subcellularLocation>
    <subcellularLocation>
        <location>Cytoplasm</location>
    </subcellularLocation>
    <subcellularLocation>
        <location>Endosome</location>
    </subcellularLocation>
    <text>Localizes to the plasma membrane and to filamentous structures within the cell corresponding to ARF6 regulated tubular endosomes. Activation of RAC1 and CDC42 can direct the relocalization of USP6 to the plasma membrane in a manner that depends on the integrity of the actin cytoskeleton.</text>
</comment>
<comment type="alternative products">
    <event type="alternative splicing"/>
    <isoform>
        <id>P35125-1</id>
        <name>1</name>
        <sequence type="displayed"/>
    </isoform>
    <isoform>
        <id>P35125-2</id>
        <name>2</name>
        <name>213(ORF2)</name>
        <sequence type="described" ref="VSP_010878 VSP_010879"/>
    </isoform>
    <isoform>
        <id>P35125-3</id>
        <name>3</name>
        <name>210(ORF1)</name>
        <name>oncTre210p</name>
        <sequence type="described" ref="VSP_010880 VSP_010881"/>
    </isoform>
</comment>
<comment type="tissue specificity">
    <text evidence="5 10">Testis specific. Expressed in various cancer cell lines.</text>
</comment>
<comment type="domain">
    <text>The Rab-GAP TBC domain lacks GTPase activator activity but is necessary for interaction with ARF6.</text>
</comment>
<comment type="PTM">
    <text evidence="11">Monubiquitinated; ubiquitination is calmodulin and calcium dependent.</text>
</comment>
<comment type="disease">
    <text evidence="8">A chromosomal aberration involving USP6 is a common genetic feature of aneurysmal bone cyst, a benign osseous neoplasm. Translocation t(16;17)(q22;p13) with CDH11. The translocation generates a fusion gene in which the strong CDH11 promoter is fused to the entire USP6 coding sequence, resulting in USP6 transcriptional up-regulation (PubMed:15026324).</text>
</comment>
<comment type="miscellaneous">
    <text>The USP6 gene only exists in the primate lineage.</text>
</comment>
<comment type="miscellaneous">
    <molecule>Isoform 3</molecule>
    <text evidence="17">Was shown to be tumorigenic in transfected mice and seems not to act as GTPase activating protein.</text>
</comment>
<comment type="similarity">
    <text evidence="17">Belongs to the peptidase C19 family.</text>
</comment>
<comment type="online information" name="Atlas of Genetics and Cytogenetics in Oncology and Haematology">
    <link uri="https://atlasgeneticsoncology.org/gene/530/USP6"/>
</comment>
<proteinExistence type="evidence at protein level"/>
<keyword id="KW-0025">Alternative splicing</keyword>
<keyword id="KW-0112">Calmodulin-binding</keyword>
<keyword id="KW-1003">Cell membrane</keyword>
<keyword id="KW-0160">Chromosomal rearrangement</keyword>
<keyword id="KW-0963">Cytoplasm</keyword>
<keyword id="KW-0967">Endosome</keyword>
<keyword id="KW-0378">Hydrolase</keyword>
<keyword id="KW-0472">Membrane</keyword>
<keyword id="KW-0645">Protease</keyword>
<keyword id="KW-1267">Proteomics identification</keyword>
<keyword id="KW-0656">Proto-oncogene</keyword>
<keyword id="KW-1185">Reference proteome</keyword>
<keyword id="KW-0788">Thiol protease</keyword>
<keyword id="KW-0832">Ubl conjugation</keyword>
<keyword id="KW-0833">Ubl conjugation pathway</keyword>
<accession>P35125</accession>
<accession>B9A6N0</accession>
<accession>Q15634</accession>
<accession>Q86WP6</accession>
<accession>Q8IWT4</accession>
<protein>
    <recommendedName>
        <fullName>Ubiquitin carboxyl-terminal hydrolase 6</fullName>
        <ecNumber>3.4.19.12</ecNumber>
    </recommendedName>
    <alternativeName>
        <fullName>Deubiquitinating enzyme 6</fullName>
    </alternativeName>
    <alternativeName>
        <fullName>Proto-oncogene TRE-2</fullName>
    </alternativeName>
    <alternativeName>
        <fullName evidence="16">RN-tre</fullName>
    </alternativeName>
    <alternativeName>
        <fullName>Ubiquitin thioesterase 6</fullName>
    </alternativeName>
    <alternativeName>
        <fullName>Ubiquitin-specific-processing protease 6</fullName>
    </alternativeName>
</protein>
<feature type="chain" id="PRO_0000080625" description="Ubiquitin carboxyl-terminal hydrolase 6">
    <location>
        <begin position="1"/>
        <end position="1406"/>
    </location>
</feature>
<feature type="domain" description="Rab-GAP TBC" evidence="1">
    <location>
        <begin position="100"/>
        <end position="292"/>
    </location>
</feature>
<feature type="domain" description="USP">
    <location>
        <begin position="532"/>
        <end position="1369"/>
    </location>
</feature>
<feature type="region of interest" description="Disordered" evidence="4">
    <location>
        <begin position="348"/>
        <end position="380"/>
    </location>
</feature>
<feature type="region of interest" description="Disordered" evidence="4">
    <location>
        <begin position="1120"/>
        <end position="1231"/>
    </location>
</feature>
<feature type="region of interest" description="Disordered" evidence="4">
    <location>
        <begin position="1384"/>
        <end position="1406"/>
    </location>
</feature>
<feature type="compositionally biased region" description="Basic and acidic residues" evidence="4">
    <location>
        <begin position="1129"/>
        <end position="1155"/>
    </location>
</feature>
<feature type="compositionally biased region" description="Low complexity" evidence="4">
    <location>
        <begin position="1156"/>
        <end position="1197"/>
    </location>
</feature>
<feature type="active site" description="Nucleophile">
    <location>
        <position position="541"/>
    </location>
</feature>
<feature type="active site" description="Proton acceptor" evidence="2 3">
    <location>
        <position position="1328"/>
    </location>
</feature>
<feature type="splice variant" id="VSP_010878" description="In isoform 2." evidence="15">
    <location>
        <begin position="1"/>
        <end position="317"/>
    </location>
</feature>
<feature type="splice variant" id="VSP_010879" description="In isoform 2." evidence="15">
    <original>GLWARLRNQFFDTWAMNDDTVLKHLRASTKKLTRKQGDLPPP</original>
    <variation>MPQRLPHARQHTPLPLGSADYRRVVSVRPQGPHRDPKDSRDA</variation>
    <location>
        <begin position="318"/>
        <end position="359"/>
    </location>
</feature>
<feature type="splice variant" id="VSP_010880" description="In isoform 3." evidence="15">
    <original>NFPQDNQKVQLSV</original>
    <variation>ISPLHHLQMECSP</variation>
    <location>
        <begin position="774"/>
        <end position="786"/>
    </location>
</feature>
<feature type="splice variant" id="VSP_010881" description="In isoform 3." evidence="15">
    <location>
        <begin position="787"/>
        <end position="1406"/>
    </location>
</feature>
<feature type="sequence variant" id="VAR_051522" description="In dbSNP:rs8073787." evidence="10 12 14">
    <original>W</original>
    <variation>R</variation>
    <location>
        <position position="475"/>
    </location>
</feature>
<feature type="sequence variant" id="VAR_059749" description="In dbSNP:rs2304449.">
    <original>V</original>
    <variation>I</variation>
    <location>
        <position position="525"/>
    </location>
</feature>
<feature type="sequence variant" id="VAR_051523" description="In dbSNP:rs9899177." evidence="10">
    <original>R</original>
    <variation>Q</variation>
    <location>
        <position position="912"/>
    </location>
</feature>
<feature type="mutagenesis site" description="Does not restore GAP activity in yeast complementation assay." evidence="7">
    <original>T</original>
    <variation>R</variation>
    <location>
        <position position="150"/>
    </location>
</feature>
<feature type="mutagenesis site" description="Does not restore GAP activity in yeast complementation assay." evidence="7">
    <original>R</original>
    <variation>Q</variation>
    <location>
        <position position="187"/>
    </location>
</feature>
<feature type="mutagenesis site" description="Loss of enzyme activity." evidence="11">
    <original>C</original>
    <variation>S</variation>
    <location>
        <position position="541"/>
    </location>
</feature>
<feature type="sequence conflict" description="In Ref. 1; CAA45111." evidence="17" ref="1">
    <original>N</original>
    <variation>I</variation>
    <location>
        <position position="963"/>
    </location>
</feature>
<dbReference type="EC" id="3.4.19.12"/>
<dbReference type="EMBL" id="X63546">
    <property type="protein sequence ID" value="CAA45108.1"/>
    <property type="molecule type" value="mRNA"/>
</dbReference>
<dbReference type="EMBL" id="X63547">
    <property type="protein sequence ID" value="CAA45111.1"/>
    <property type="molecule type" value="mRNA"/>
</dbReference>
<dbReference type="EMBL" id="AY143550">
    <property type="protein sequence ID" value="AAN38838.1"/>
    <property type="molecule type" value="mRNA"/>
</dbReference>
<dbReference type="EMBL" id="AY163314">
    <property type="protein sequence ID" value="AAO21348.1"/>
    <property type="molecule type" value="Genomic_DNA"/>
</dbReference>
<dbReference type="EMBL" id="AB449915">
    <property type="protein sequence ID" value="BAH16658.1"/>
    <property type="molecule type" value="mRNA"/>
</dbReference>
<dbReference type="EMBL" id="AC012146">
    <property type="status" value="NOT_ANNOTATED_CDS"/>
    <property type="molecule type" value="Genomic_DNA"/>
</dbReference>
<dbReference type="EMBL" id="CH471108">
    <property type="protein sequence ID" value="EAW90354.1"/>
    <property type="molecule type" value="Genomic_DNA"/>
</dbReference>
<dbReference type="CCDS" id="CCDS11069.2">
    <molecule id="P35125-1"/>
</dbReference>
<dbReference type="PIR" id="S57867">
    <property type="entry name" value="S57867"/>
</dbReference>
<dbReference type="PIR" id="S57868">
    <property type="entry name" value="S22158"/>
</dbReference>
<dbReference type="PIR" id="S57874">
    <property type="entry name" value="S22155"/>
</dbReference>
<dbReference type="RefSeq" id="NP_001291213.1">
    <molecule id="P35125-1"/>
    <property type="nucleotide sequence ID" value="NM_001304284.2"/>
</dbReference>
<dbReference type="RefSeq" id="NP_004496.2">
    <molecule id="P35125-1"/>
    <property type="nucleotide sequence ID" value="NM_004505.4"/>
</dbReference>
<dbReference type="RefSeq" id="XP_011522352.1">
    <molecule id="P35125-1"/>
    <property type="nucleotide sequence ID" value="XM_011524050.2"/>
</dbReference>
<dbReference type="RefSeq" id="XP_011522353.1">
    <molecule id="P35125-1"/>
    <property type="nucleotide sequence ID" value="XM_011524051.3"/>
</dbReference>
<dbReference type="RefSeq" id="XP_011522354.1">
    <molecule id="P35125-1"/>
    <property type="nucleotide sequence ID" value="XM_011524052.3"/>
</dbReference>
<dbReference type="RefSeq" id="XP_011522355.1">
    <molecule id="P35125-1"/>
    <property type="nucleotide sequence ID" value="XM_011524053.3"/>
</dbReference>
<dbReference type="RefSeq" id="XP_011522356.1">
    <molecule id="P35125-1"/>
    <property type="nucleotide sequence ID" value="XM_011524054.3"/>
</dbReference>
<dbReference type="RefSeq" id="XP_011522357.1">
    <molecule id="P35125-1"/>
    <property type="nucleotide sequence ID" value="XM_011524055.3"/>
</dbReference>
<dbReference type="RefSeq" id="XP_011522358.1">
    <molecule id="P35125-1"/>
    <property type="nucleotide sequence ID" value="XM_011524056.3"/>
</dbReference>
<dbReference type="RefSeq" id="XP_011522361.1">
    <molecule id="P35125-3"/>
    <property type="nucleotide sequence ID" value="XM_011524059.3"/>
</dbReference>
<dbReference type="RefSeq" id="XP_016880779.1">
    <property type="nucleotide sequence ID" value="XM_017025290.1"/>
</dbReference>
<dbReference type="SMR" id="P35125"/>
<dbReference type="BioGRID" id="114552">
    <property type="interactions" value="26"/>
</dbReference>
<dbReference type="FunCoup" id="P35125">
    <property type="interactions" value="153"/>
</dbReference>
<dbReference type="IntAct" id="P35125">
    <property type="interactions" value="6"/>
</dbReference>
<dbReference type="STRING" id="9606.ENSP00000460380"/>
<dbReference type="BindingDB" id="P35125"/>
<dbReference type="ChEMBL" id="CHEMBL4630817"/>
<dbReference type="MEROPS" id="C19.009"/>
<dbReference type="MEROPS" id="C19.044"/>
<dbReference type="iPTMnet" id="P35125"/>
<dbReference type="PhosphoSitePlus" id="P35125"/>
<dbReference type="BioMuta" id="USP6"/>
<dbReference type="DMDM" id="50403738"/>
<dbReference type="jPOST" id="P35125"/>
<dbReference type="MassIVE" id="P35125"/>
<dbReference type="PaxDb" id="9606-ENSP00000460380"/>
<dbReference type="PeptideAtlas" id="P35125"/>
<dbReference type="ProteomicsDB" id="54980">
    <molecule id="P35125-1"/>
</dbReference>
<dbReference type="ProteomicsDB" id="54981">
    <molecule id="P35125-2"/>
</dbReference>
<dbReference type="ProteomicsDB" id="54982">
    <molecule id="P35125-3"/>
</dbReference>
<dbReference type="Antibodypedia" id="11505">
    <property type="antibodies" value="221 antibodies from 28 providers"/>
</dbReference>
<dbReference type="DNASU" id="9098"/>
<dbReference type="Ensembl" id="ENST00000250066.6">
    <molecule id="P35125-1"/>
    <property type="protein sequence ID" value="ENSP00000250066.6"/>
    <property type="gene ID" value="ENSG00000129204.17"/>
</dbReference>
<dbReference type="Ensembl" id="ENST00000572949.5">
    <molecule id="P35125-3"/>
    <property type="protein sequence ID" value="ENSP00000461581.1"/>
    <property type="gene ID" value="ENSG00000129204.17"/>
</dbReference>
<dbReference type="Ensembl" id="ENST00000574788.6">
    <molecule id="P35125-1"/>
    <property type="protein sequence ID" value="ENSP00000460380.1"/>
    <property type="gene ID" value="ENSG00000129204.17"/>
</dbReference>
<dbReference type="GeneID" id="9098"/>
<dbReference type="KEGG" id="hsa:9098"/>
<dbReference type="MANE-Select" id="ENST00000574788.6">
    <property type="protein sequence ID" value="ENSP00000460380.1"/>
    <property type="RefSeq nucleotide sequence ID" value="NM_001304284.2"/>
    <property type="RefSeq protein sequence ID" value="NP_001291213.1"/>
</dbReference>
<dbReference type="UCSC" id="uc002gau.2">
    <molecule id="P35125-1"/>
    <property type="organism name" value="human"/>
</dbReference>
<dbReference type="AGR" id="HGNC:12629"/>
<dbReference type="CTD" id="9098"/>
<dbReference type="DisGeNET" id="9098"/>
<dbReference type="GeneCards" id="USP6"/>
<dbReference type="HGNC" id="HGNC:12629">
    <property type="gene designation" value="USP6"/>
</dbReference>
<dbReference type="HPA" id="ENSG00000129204">
    <property type="expression patterns" value="Group enriched (skeletal muscle, testis)"/>
</dbReference>
<dbReference type="MalaCards" id="USP6"/>
<dbReference type="MIM" id="604334">
    <property type="type" value="gene"/>
</dbReference>
<dbReference type="neXtProt" id="NX_P35125"/>
<dbReference type="OpenTargets" id="ENSG00000129204"/>
<dbReference type="Orphanet" id="477742">
    <property type="disease" value="Nodular fasciitis"/>
</dbReference>
<dbReference type="PharmGKB" id="PA37254"/>
<dbReference type="VEuPathDB" id="HostDB:ENSG00000129204"/>
<dbReference type="eggNOG" id="KOG1102">
    <property type="taxonomic scope" value="Eukaryota"/>
</dbReference>
<dbReference type="eggNOG" id="KOG1870">
    <property type="taxonomic scope" value="Eukaryota"/>
</dbReference>
<dbReference type="GeneTree" id="ENSGT00940000155797"/>
<dbReference type="HOGENOM" id="CLU_005123_0_0_1"/>
<dbReference type="InParanoid" id="P35125"/>
<dbReference type="OrthoDB" id="265776at2759"/>
<dbReference type="PAN-GO" id="P35125">
    <property type="GO annotations" value="2 GO annotations based on evolutionary models"/>
</dbReference>
<dbReference type="PhylomeDB" id="P35125"/>
<dbReference type="TreeFam" id="TF324190"/>
<dbReference type="PathwayCommons" id="P35125"/>
<dbReference type="SignaLink" id="P35125"/>
<dbReference type="SIGNOR" id="P35125"/>
<dbReference type="BioGRID-ORCS" id="9098">
    <property type="hits" value="17 hits in 1152 CRISPR screens"/>
</dbReference>
<dbReference type="CD-CODE" id="DEE660B4">
    <property type="entry name" value="Stress granule"/>
</dbReference>
<dbReference type="ChiTaRS" id="USP6">
    <property type="organism name" value="human"/>
</dbReference>
<dbReference type="GeneWiki" id="USP6"/>
<dbReference type="GenomeRNAi" id="9098"/>
<dbReference type="Pharos" id="P35125">
    <property type="development level" value="Tbio"/>
</dbReference>
<dbReference type="PRO" id="PR:P35125"/>
<dbReference type="Proteomes" id="UP000005640">
    <property type="component" value="Chromosome 17"/>
</dbReference>
<dbReference type="RNAct" id="P35125">
    <property type="molecule type" value="protein"/>
</dbReference>
<dbReference type="Bgee" id="ENSG00000129204">
    <property type="expression patterns" value="Expressed in Brodmann (1909) area 23 and 199 other cell types or tissues"/>
</dbReference>
<dbReference type="ExpressionAtlas" id="P35125">
    <property type="expression patterns" value="baseline and differential"/>
</dbReference>
<dbReference type="GO" id="GO:0005737">
    <property type="term" value="C:cytoplasm"/>
    <property type="evidence" value="ECO:0000314"/>
    <property type="project" value="UniProtKB"/>
</dbReference>
<dbReference type="GO" id="GO:0098978">
    <property type="term" value="C:glutamatergic synapse"/>
    <property type="evidence" value="ECO:0000314"/>
    <property type="project" value="SynGO"/>
</dbReference>
<dbReference type="GO" id="GO:0005794">
    <property type="term" value="C:Golgi apparatus"/>
    <property type="evidence" value="ECO:0000318"/>
    <property type="project" value="GO_Central"/>
</dbReference>
<dbReference type="GO" id="GO:0005764">
    <property type="term" value="C:lysosome"/>
    <property type="evidence" value="ECO:0000304"/>
    <property type="project" value="ProtInc"/>
</dbReference>
<dbReference type="GO" id="GO:0005886">
    <property type="term" value="C:plasma membrane"/>
    <property type="evidence" value="ECO:0000314"/>
    <property type="project" value="UniProtKB"/>
</dbReference>
<dbReference type="GO" id="GO:0099092">
    <property type="term" value="C:postsynaptic density, intracellular component"/>
    <property type="evidence" value="ECO:0000314"/>
    <property type="project" value="SynGO"/>
</dbReference>
<dbReference type="GO" id="GO:0055037">
    <property type="term" value="C:recycling endosome"/>
    <property type="evidence" value="ECO:0000314"/>
    <property type="project" value="UniProtKB"/>
</dbReference>
<dbReference type="GO" id="GO:0005516">
    <property type="term" value="F:calmodulin binding"/>
    <property type="evidence" value="ECO:0007669"/>
    <property type="project" value="UniProtKB-KW"/>
</dbReference>
<dbReference type="GO" id="GO:0004843">
    <property type="term" value="F:cysteine-type deubiquitinase activity"/>
    <property type="evidence" value="ECO:0000314"/>
    <property type="project" value="UniProtKB"/>
</dbReference>
<dbReference type="GO" id="GO:0004197">
    <property type="term" value="F:cysteine-type endopeptidase activity"/>
    <property type="evidence" value="ECO:0000304"/>
    <property type="project" value="UniProtKB"/>
</dbReference>
<dbReference type="GO" id="GO:0003676">
    <property type="term" value="F:nucleic acid binding"/>
    <property type="evidence" value="ECO:0000304"/>
    <property type="project" value="ProtInc"/>
</dbReference>
<dbReference type="GO" id="GO:0016579">
    <property type="term" value="P:protein deubiquitination"/>
    <property type="evidence" value="ECO:0000314"/>
    <property type="project" value="UniProtKB"/>
</dbReference>
<dbReference type="GO" id="GO:0036211">
    <property type="term" value="P:protein modification process"/>
    <property type="evidence" value="ECO:0000303"/>
    <property type="project" value="UniProtKB"/>
</dbReference>
<dbReference type="GO" id="GO:0006508">
    <property type="term" value="P:proteolysis"/>
    <property type="evidence" value="ECO:0007669"/>
    <property type="project" value="UniProtKB-KW"/>
</dbReference>
<dbReference type="GO" id="GO:0099149">
    <property type="term" value="P:regulation of postsynaptic neurotransmitter receptor internalization"/>
    <property type="evidence" value="ECO:0000314"/>
    <property type="project" value="SynGO"/>
</dbReference>
<dbReference type="GO" id="GO:0060627">
    <property type="term" value="P:regulation of vesicle-mediated transport"/>
    <property type="evidence" value="ECO:0000314"/>
    <property type="project" value="UniProtKB"/>
</dbReference>
<dbReference type="FunFam" id="1.10.10.750:FF:000001">
    <property type="entry name" value="TBC1 domain family member 10A"/>
    <property type="match status" value="1"/>
</dbReference>
<dbReference type="FunFam" id="1.10.8.270:FF:000016">
    <property type="entry name" value="TBC1 domain family member 2A"/>
    <property type="match status" value="1"/>
</dbReference>
<dbReference type="FunFam" id="3.90.70.10:FF:000018">
    <property type="entry name" value="Ubiquitin carboxyl-terminal hydrolase 32"/>
    <property type="match status" value="1"/>
</dbReference>
<dbReference type="FunFam" id="3.90.70.10:FF:000065">
    <property type="entry name" value="Ubiquitin carboxyl-terminal hydrolase 32"/>
    <property type="match status" value="1"/>
</dbReference>
<dbReference type="FunFam" id="3.90.70.10:FF:000076">
    <property type="entry name" value="Ubiquitin carboxyl-terminal hydrolase 32"/>
    <property type="match status" value="1"/>
</dbReference>
<dbReference type="FunFam" id="1.10.472.80:FF:000058">
    <property type="entry name" value="Ubiquitin specific peptidase 6"/>
    <property type="match status" value="1"/>
</dbReference>
<dbReference type="Gene3D" id="3.90.70.10">
    <property type="entry name" value="Cysteine proteinases"/>
    <property type="match status" value="3"/>
</dbReference>
<dbReference type="Gene3D" id="1.10.8.270">
    <property type="entry name" value="putative rabgap domain of human tbc1 domain family member 14 like domains"/>
    <property type="match status" value="1"/>
</dbReference>
<dbReference type="Gene3D" id="1.10.10.750">
    <property type="entry name" value="Ypt/Rab-GAP domain of gyp1p, domain 1"/>
    <property type="match status" value="1"/>
</dbReference>
<dbReference type="Gene3D" id="1.10.472.80">
    <property type="entry name" value="Ypt/Rab-GAP domain of gyp1p, domain 3"/>
    <property type="match status" value="1"/>
</dbReference>
<dbReference type="InterPro" id="IPR038765">
    <property type="entry name" value="Papain-like_cys_pep_sf"/>
</dbReference>
<dbReference type="InterPro" id="IPR001394">
    <property type="entry name" value="Peptidase_C19_UCH"/>
</dbReference>
<dbReference type="InterPro" id="IPR000195">
    <property type="entry name" value="Rab-GAP-TBC_dom"/>
</dbReference>
<dbReference type="InterPro" id="IPR035969">
    <property type="entry name" value="Rab-GAP_TBC_sf"/>
</dbReference>
<dbReference type="InterPro" id="IPR050185">
    <property type="entry name" value="Ub_carboxyl-term_hydrolase"/>
</dbReference>
<dbReference type="InterPro" id="IPR018200">
    <property type="entry name" value="USP_CS"/>
</dbReference>
<dbReference type="InterPro" id="IPR028889">
    <property type="entry name" value="USP_dom"/>
</dbReference>
<dbReference type="PANTHER" id="PTHR21646">
    <property type="entry name" value="UBIQUITIN CARBOXYL-TERMINAL HYDROLASE"/>
    <property type="match status" value="1"/>
</dbReference>
<dbReference type="PANTHER" id="PTHR21646:SF96">
    <property type="entry name" value="UBIQUITIN CARBOXYL-TERMINAL HYDROLASE 6"/>
    <property type="match status" value="1"/>
</dbReference>
<dbReference type="Pfam" id="PF00566">
    <property type="entry name" value="RabGAP-TBC"/>
    <property type="match status" value="1"/>
</dbReference>
<dbReference type="Pfam" id="PF00443">
    <property type="entry name" value="UCH"/>
    <property type="match status" value="1"/>
</dbReference>
<dbReference type="SMART" id="SM00164">
    <property type="entry name" value="TBC"/>
    <property type="match status" value="1"/>
</dbReference>
<dbReference type="SUPFAM" id="SSF54001">
    <property type="entry name" value="Cysteine proteinases"/>
    <property type="match status" value="1"/>
</dbReference>
<dbReference type="SUPFAM" id="SSF47923">
    <property type="entry name" value="Ypt/Rab-GAP domain of gyp1p"/>
    <property type="match status" value="2"/>
</dbReference>
<dbReference type="PROSITE" id="PS50086">
    <property type="entry name" value="TBC_RABGAP"/>
    <property type="match status" value="1"/>
</dbReference>
<dbReference type="PROSITE" id="PS00972">
    <property type="entry name" value="USP_1"/>
    <property type="match status" value="1"/>
</dbReference>
<dbReference type="PROSITE" id="PS00973">
    <property type="entry name" value="USP_2"/>
    <property type="match status" value="1"/>
</dbReference>
<dbReference type="PROSITE" id="PS50235">
    <property type="entry name" value="USP_3"/>
    <property type="match status" value="1"/>
</dbReference>